<protein>
    <recommendedName>
        <fullName evidence="1">Segregation and condensation protein A</fullName>
    </recommendedName>
</protein>
<proteinExistence type="inferred from homology"/>
<sequence length="249" mass="29157">MVEMNFKVDAFEGPLDLLLHLIGQLEVDIYDIPMAEITDQYMEFVHTMQEMELDVASEYLVMAATLLAIKSKMLLPKQELEIDYDTLEEEEDPRDALVEKLMEYKRFKEAAKELKEKEAERSFYFSKPPMDLAEYDDGTKVAELDVSLNDMLSAFNKMLRRKKLNKPLHTRITTQEISIDQRMDSVLEKLNLQVNHRLRFDELFEEQTKEQLVVTFLALLELMKRKLVEVEQAESFADLYVQGKGEEIS</sequence>
<comment type="function">
    <text evidence="1">Participates in chromosomal partition during cell division. May act via the formation of a condensin-like complex containing Smc and ScpB that pull DNA away from mid-cell into both cell halves.</text>
</comment>
<comment type="subunit">
    <text evidence="1">Component of a cohesin-like complex composed of ScpA, ScpB and the Smc homodimer, in which ScpA and ScpB bind to the head domain of Smc. The presence of the three proteins is required for the association of the complex with DNA.</text>
</comment>
<comment type="subcellular location">
    <subcellularLocation>
        <location evidence="1">Cytoplasm</location>
    </subcellularLocation>
    <text evidence="1">Associated with two foci at the outer edges of the nucleoid region in young cells, and at four foci within both cell halves in older cells.</text>
</comment>
<comment type="similarity">
    <text evidence="1">Belongs to the ScpA family.</text>
</comment>
<accession>C1KWQ2</accession>
<feature type="chain" id="PRO_1000215947" description="Segregation and condensation protein A">
    <location>
        <begin position="1"/>
        <end position="249"/>
    </location>
</feature>
<dbReference type="EMBL" id="FM242711">
    <property type="protein sequence ID" value="CAS05727.1"/>
    <property type="molecule type" value="Genomic_DNA"/>
</dbReference>
<dbReference type="RefSeq" id="WP_003723598.1">
    <property type="nucleotide sequence ID" value="NC_012488.1"/>
</dbReference>
<dbReference type="SMR" id="C1KWQ2"/>
<dbReference type="KEGG" id="lmc:Lm4b_01970"/>
<dbReference type="HOGENOM" id="CLU_038686_3_1_9"/>
<dbReference type="GO" id="GO:0005737">
    <property type="term" value="C:cytoplasm"/>
    <property type="evidence" value="ECO:0007669"/>
    <property type="project" value="UniProtKB-SubCell"/>
</dbReference>
<dbReference type="GO" id="GO:0051301">
    <property type="term" value="P:cell division"/>
    <property type="evidence" value="ECO:0007669"/>
    <property type="project" value="UniProtKB-KW"/>
</dbReference>
<dbReference type="GO" id="GO:0007059">
    <property type="term" value="P:chromosome segregation"/>
    <property type="evidence" value="ECO:0007669"/>
    <property type="project" value="UniProtKB-UniRule"/>
</dbReference>
<dbReference type="GO" id="GO:0006260">
    <property type="term" value="P:DNA replication"/>
    <property type="evidence" value="ECO:0007669"/>
    <property type="project" value="UniProtKB-UniRule"/>
</dbReference>
<dbReference type="Gene3D" id="6.10.250.2410">
    <property type="match status" value="1"/>
</dbReference>
<dbReference type="Gene3D" id="1.10.10.580">
    <property type="entry name" value="Structural maintenance of chromosome 1. Chain E"/>
    <property type="match status" value="1"/>
</dbReference>
<dbReference type="HAMAP" id="MF_01805">
    <property type="entry name" value="ScpA"/>
    <property type="match status" value="1"/>
</dbReference>
<dbReference type="InterPro" id="IPR003768">
    <property type="entry name" value="ScpA"/>
</dbReference>
<dbReference type="InterPro" id="IPR023093">
    <property type="entry name" value="ScpA-like_C"/>
</dbReference>
<dbReference type="NCBIfam" id="NF000995">
    <property type="entry name" value="PRK00104.1-4"/>
    <property type="match status" value="1"/>
</dbReference>
<dbReference type="PANTHER" id="PTHR33969">
    <property type="entry name" value="SEGREGATION AND CONDENSATION PROTEIN A"/>
    <property type="match status" value="1"/>
</dbReference>
<dbReference type="PANTHER" id="PTHR33969:SF2">
    <property type="entry name" value="SEGREGATION AND CONDENSATION PROTEIN A"/>
    <property type="match status" value="1"/>
</dbReference>
<dbReference type="Pfam" id="PF02616">
    <property type="entry name" value="SMC_ScpA"/>
    <property type="match status" value="1"/>
</dbReference>
<evidence type="ECO:0000255" key="1">
    <source>
        <dbReference type="HAMAP-Rule" id="MF_01805"/>
    </source>
</evidence>
<organism>
    <name type="scientific">Listeria monocytogenes serotype 4b (strain CLIP80459)</name>
    <dbReference type="NCBI Taxonomy" id="568819"/>
    <lineage>
        <taxon>Bacteria</taxon>
        <taxon>Bacillati</taxon>
        <taxon>Bacillota</taxon>
        <taxon>Bacilli</taxon>
        <taxon>Bacillales</taxon>
        <taxon>Listeriaceae</taxon>
        <taxon>Listeria</taxon>
    </lineage>
</organism>
<keyword id="KW-0131">Cell cycle</keyword>
<keyword id="KW-0132">Cell division</keyword>
<keyword id="KW-0159">Chromosome partition</keyword>
<keyword id="KW-0963">Cytoplasm</keyword>
<name>SCPA_LISMC</name>
<gene>
    <name evidence="1" type="primary">scpA</name>
    <name type="ordered locus">Lm4b_01970</name>
</gene>
<reference key="1">
    <citation type="journal article" date="2012" name="BMC Genomics">
        <title>Comparative genomics and transcriptomics of lineages I, II, and III strains of Listeria monocytogenes.</title>
        <authorList>
            <person name="Hain T."/>
            <person name="Ghai R."/>
            <person name="Billion A."/>
            <person name="Kuenne C.T."/>
            <person name="Steinweg C."/>
            <person name="Izar B."/>
            <person name="Mohamed W."/>
            <person name="Mraheil M."/>
            <person name="Domann E."/>
            <person name="Schaffrath S."/>
            <person name="Karst U."/>
            <person name="Goesmann A."/>
            <person name="Oehm S."/>
            <person name="Puhler A."/>
            <person name="Merkl R."/>
            <person name="Vorwerk S."/>
            <person name="Glaser P."/>
            <person name="Garrido P."/>
            <person name="Rusniok C."/>
            <person name="Buchrieser C."/>
            <person name="Goebel W."/>
            <person name="Chakraborty T."/>
        </authorList>
    </citation>
    <scope>NUCLEOTIDE SEQUENCE [LARGE SCALE GENOMIC DNA]</scope>
    <source>
        <strain>CLIP80459</strain>
    </source>
</reference>